<accession>Q8P8B5</accession>
<organism>
    <name type="scientific">Xanthomonas campestris pv. campestris (strain ATCC 33913 / DSM 3586 / NCPPB 528 / LMG 568 / P 25)</name>
    <dbReference type="NCBI Taxonomy" id="190485"/>
    <lineage>
        <taxon>Bacteria</taxon>
        <taxon>Pseudomonadati</taxon>
        <taxon>Pseudomonadota</taxon>
        <taxon>Gammaproteobacteria</taxon>
        <taxon>Lysobacterales</taxon>
        <taxon>Lysobacteraceae</taxon>
        <taxon>Xanthomonas</taxon>
    </lineage>
</organism>
<gene>
    <name evidence="1" type="primary">miaB</name>
    <name type="ordered locus">XCC2328</name>
</gene>
<keyword id="KW-0004">4Fe-4S</keyword>
<keyword id="KW-0963">Cytoplasm</keyword>
<keyword id="KW-0408">Iron</keyword>
<keyword id="KW-0411">Iron-sulfur</keyword>
<keyword id="KW-0479">Metal-binding</keyword>
<keyword id="KW-1185">Reference proteome</keyword>
<keyword id="KW-0949">S-adenosyl-L-methionine</keyword>
<keyword id="KW-0808">Transferase</keyword>
<keyword id="KW-0819">tRNA processing</keyword>
<dbReference type="EC" id="2.8.4.3" evidence="1"/>
<dbReference type="EMBL" id="AE008922">
    <property type="protein sequence ID" value="AAM41606.1"/>
    <property type="molecule type" value="Genomic_DNA"/>
</dbReference>
<dbReference type="RefSeq" id="NP_637682.1">
    <property type="nucleotide sequence ID" value="NC_003902.1"/>
</dbReference>
<dbReference type="RefSeq" id="WP_011037471.1">
    <property type="nucleotide sequence ID" value="NC_003902.1"/>
</dbReference>
<dbReference type="SMR" id="Q8P8B5"/>
<dbReference type="STRING" id="190485.XCC2328"/>
<dbReference type="EnsemblBacteria" id="AAM41606">
    <property type="protein sequence ID" value="AAM41606"/>
    <property type="gene ID" value="XCC2328"/>
</dbReference>
<dbReference type="KEGG" id="xcc:XCC2328"/>
<dbReference type="PATRIC" id="fig|190485.4.peg.2479"/>
<dbReference type="eggNOG" id="COG0621">
    <property type="taxonomic scope" value="Bacteria"/>
</dbReference>
<dbReference type="HOGENOM" id="CLU_018697_2_2_6"/>
<dbReference type="OrthoDB" id="9805215at2"/>
<dbReference type="Proteomes" id="UP000001010">
    <property type="component" value="Chromosome"/>
</dbReference>
<dbReference type="GO" id="GO:0005829">
    <property type="term" value="C:cytosol"/>
    <property type="evidence" value="ECO:0000318"/>
    <property type="project" value="GO_Central"/>
</dbReference>
<dbReference type="GO" id="GO:0051539">
    <property type="term" value="F:4 iron, 4 sulfur cluster binding"/>
    <property type="evidence" value="ECO:0000318"/>
    <property type="project" value="GO_Central"/>
</dbReference>
<dbReference type="GO" id="GO:0046872">
    <property type="term" value="F:metal ion binding"/>
    <property type="evidence" value="ECO:0007669"/>
    <property type="project" value="UniProtKB-KW"/>
</dbReference>
<dbReference type="GO" id="GO:0035597">
    <property type="term" value="F:N6-isopentenyladenosine methylthiotransferase activity"/>
    <property type="evidence" value="ECO:0000318"/>
    <property type="project" value="GO_Central"/>
</dbReference>
<dbReference type="GO" id="GO:0035600">
    <property type="term" value="P:tRNA methylthiolation"/>
    <property type="evidence" value="ECO:0000318"/>
    <property type="project" value="GO_Central"/>
</dbReference>
<dbReference type="CDD" id="cd01335">
    <property type="entry name" value="Radical_SAM"/>
    <property type="match status" value="1"/>
</dbReference>
<dbReference type="FunFam" id="3.40.50.12160:FF:000001">
    <property type="entry name" value="tRNA-2-methylthio-N(6)-dimethylallyladenosine synthase"/>
    <property type="match status" value="1"/>
</dbReference>
<dbReference type="FunFam" id="3.80.30.20:FF:000001">
    <property type="entry name" value="tRNA-2-methylthio-N(6)-dimethylallyladenosine synthase 2"/>
    <property type="match status" value="1"/>
</dbReference>
<dbReference type="Gene3D" id="3.40.50.12160">
    <property type="entry name" value="Methylthiotransferase, N-terminal domain"/>
    <property type="match status" value="1"/>
</dbReference>
<dbReference type="Gene3D" id="3.80.30.20">
    <property type="entry name" value="tm_1862 like domain"/>
    <property type="match status" value="1"/>
</dbReference>
<dbReference type="HAMAP" id="MF_01864">
    <property type="entry name" value="tRNA_metthiotr_MiaB"/>
    <property type="match status" value="1"/>
</dbReference>
<dbReference type="InterPro" id="IPR006638">
    <property type="entry name" value="Elp3/MiaA/NifB-like_rSAM"/>
</dbReference>
<dbReference type="InterPro" id="IPR005839">
    <property type="entry name" value="Methylthiotransferase"/>
</dbReference>
<dbReference type="InterPro" id="IPR020612">
    <property type="entry name" value="Methylthiotransferase_CS"/>
</dbReference>
<dbReference type="InterPro" id="IPR013848">
    <property type="entry name" value="Methylthiotransferase_N"/>
</dbReference>
<dbReference type="InterPro" id="IPR038135">
    <property type="entry name" value="Methylthiotransferase_N_sf"/>
</dbReference>
<dbReference type="InterPro" id="IPR006463">
    <property type="entry name" value="MiaB_methiolase"/>
</dbReference>
<dbReference type="InterPro" id="IPR007197">
    <property type="entry name" value="rSAM"/>
</dbReference>
<dbReference type="InterPro" id="IPR023404">
    <property type="entry name" value="rSAM_horseshoe"/>
</dbReference>
<dbReference type="InterPro" id="IPR002792">
    <property type="entry name" value="TRAM_dom"/>
</dbReference>
<dbReference type="NCBIfam" id="TIGR01574">
    <property type="entry name" value="miaB-methiolase"/>
    <property type="match status" value="1"/>
</dbReference>
<dbReference type="NCBIfam" id="TIGR00089">
    <property type="entry name" value="MiaB/RimO family radical SAM methylthiotransferase"/>
    <property type="match status" value="1"/>
</dbReference>
<dbReference type="PANTHER" id="PTHR43020">
    <property type="entry name" value="CDK5 REGULATORY SUBUNIT-ASSOCIATED PROTEIN 1"/>
    <property type="match status" value="1"/>
</dbReference>
<dbReference type="PANTHER" id="PTHR43020:SF2">
    <property type="entry name" value="MITOCHONDRIAL TRNA METHYLTHIOTRANSFERASE CDK5RAP1"/>
    <property type="match status" value="1"/>
</dbReference>
<dbReference type="Pfam" id="PF04055">
    <property type="entry name" value="Radical_SAM"/>
    <property type="match status" value="1"/>
</dbReference>
<dbReference type="Pfam" id="PF01938">
    <property type="entry name" value="TRAM"/>
    <property type="match status" value="1"/>
</dbReference>
<dbReference type="Pfam" id="PF00919">
    <property type="entry name" value="UPF0004"/>
    <property type="match status" value="1"/>
</dbReference>
<dbReference type="SFLD" id="SFLDF00273">
    <property type="entry name" value="(dimethylallyl)adenosine_tRNA"/>
    <property type="match status" value="1"/>
</dbReference>
<dbReference type="SFLD" id="SFLDG01082">
    <property type="entry name" value="B12-binding_domain_containing"/>
    <property type="match status" value="1"/>
</dbReference>
<dbReference type="SFLD" id="SFLDG01061">
    <property type="entry name" value="methylthiotransferase"/>
    <property type="match status" value="1"/>
</dbReference>
<dbReference type="SMART" id="SM00729">
    <property type="entry name" value="Elp3"/>
    <property type="match status" value="1"/>
</dbReference>
<dbReference type="SUPFAM" id="SSF102114">
    <property type="entry name" value="Radical SAM enzymes"/>
    <property type="match status" value="1"/>
</dbReference>
<dbReference type="PROSITE" id="PS51449">
    <property type="entry name" value="MTTASE_N"/>
    <property type="match status" value="1"/>
</dbReference>
<dbReference type="PROSITE" id="PS01278">
    <property type="entry name" value="MTTASE_RADICAL"/>
    <property type="match status" value="1"/>
</dbReference>
<dbReference type="PROSITE" id="PS51918">
    <property type="entry name" value="RADICAL_SAM"/>
    <property type="match status" value="1"/>
</dbReference>
<dbReference type="PROSITE" id="PS50926">
    <property type="entry name" value="TRAM"/>
    <property type="match status" value="1"/>
</dbReference>
<reference key="1">
    <citation type="journal article" date="2002" name="Nature">
        <title>Comparison of the genomes of two Xanthomonas pathogens with differing host specificities.</title>
        <authorList>
            <person name="da Silva A.C.R."/>
            <person name="Ferro J.A."/>
            <person name="Reinach F.C."/>
            <person name="Farah C.S."/>
            <person name="Furlan L.R."/>
            <person name="Quaggio R.B."/>
            <person name="Monteiro-Vitorello C.B."/>
            <person name="Van Sluys M.A."/>
            <person name="Almeida N.F. Jr."/>
            <person name="Alves L.M.C."/>
            <person name="do Amaral A.M."/>
            <person name="Bertolini M.C."/>
            <person name="Camargo L.E.A."/>
            <person name="Camarotte G."/>
            <person name="Cannavan F."/>
            <person name="Cardozo J."/>
            <person name="Chambergo F."/>
            <person name="Ciapina L.P."/>
            <person name="Cicarelli R.M.B."/>
            <person name="Coutinho L.L."/>
            <person name="Cursino-Santos J.R."/>
            <person name="El-Dorry H."/>
            <person name="Faria J.B."/>
            <person name="Ferreira A.J.S."/>
            <person name="Ferreira R.C.C."/>
            <person name="Ferro M.I.T."/>
            <person name="Formighieri E.F."/>
            <person name="Franco M.C."/>
            <person name="Greggio C.C."/>
            <person name="Gruber A."/>
            <person name="Katsuyama A.M."/>
            <person name="Kishi L.T."/>
            <person name="Leite R.P."/>
            <person name="Lemos E.G.M."/>
            <person name="Lemos M.V.F."/>
            <person name="Locali E.C."/>
            <person name="Machado M.A."/>
            <person name="Madeira A.M.B.N."/>
            <person name="Martinez-Rossi N.M."/>
            <person name="Martins E.C."/>
            <person name="Meidanis J."/>
            <person name="Menck C.F.M."/>
            <person name="Miyaki C.Y."/>
            <person name="Moon D.H."/>
            <person name="Moreira L.M."/>
            <person name="Novo M.T.M."/>
            <person name="Okura V.K."/>
            <person name="Oliveira M.C."/>
            <person name="Oliveira V.R."/>
            <person name="Pereira H.A."/>
            <person name="Rossi A."/>
            <person name="Sena J.A.D."/>
            <person name="Silva C."/>
            <person name="de Souza R.F."/>
            <person name="Spinola L.A.F."/>
            <person name="Takita M.A."/>
            <person name="Tamura R.E."/>
            <person name="Teixeira E.C."/>
            <person name="Tezza R.I.D."/>
            <person name="Trindade dos Santos M."/>
            <person name="Truffi D."/>
            <person name="Tsai S.M."/>
            <person name="White F.F."/>
            <person name="Setubal J.C."/>
            <person name="Kitajima J.P."/>
        </authorList>
    </citation>
    <scope>NUCLEOTIDE SEQUENCE [LARGE SCALE GENOMIC DNA]</scope>
    <source>
        <strain>ATCC 33913 / DSM 3586 / NCPPB 528 / LMG 568 / P 25</strain>
    </source>
</reference>
<comment type="function">
    <text evidence="1">Catalyzes the methylthiolation of N6-(dimethylallyl)adenosine (i(6)A), leading to the formation of 2-methylthio-N6-(dimethylallyl)adenosine (ms(2)i(6)A) at position 37 in tRNAs that read codons beginning with uridine.</text>
</comment>
<comment type="catalytic activity">
    <reaction evidence="1">
        <text>N(6)-dimethylallyladenosine(37) in tRNA + (sulfur carrier)-SH + AH2 + 2 S-adenosyl-L-methionine = 2-methylsulfanyl-N(6)-dimethylallyladenosine(37) in tRNA + (sulfur carrier)-H + 5'-deoxyadenosine + L-methionine + A + S-adenosyl-L-homocysteine + 2 H(+)</text>
        <dbReference type="Rhea" id="RHEA:37067"/>
        <dbReference type="Rhea" id="RHEA-COMP:10375"/>
        <dbReference type="Rhea" id="RHEA-COMP:10376"/>
        <dbReference type="Rhea" id="RHEA-COMP:14737"/>
        <dbReference type="Rhea" id="RHEA-COMP:14739"/>
        <dbReference type="ChEBI" id="CHEBI:13193"/>
        <dbReference type="ChEBI" id="CHEBI:15378"/>
        <dbReference type="ChEBI" id="CHEBI:17319"/>
        <dbReference type="ChEBI" id="CHEBI:17499"/>
        <dbReference type="ChEBI" id="CHEBI:29917"/>
        <dbReference type="ChEBI" id="CHEBI:57844"/>
        <dbReference type="ChEBI" id="CHEBI:57856"/>
        <dbReference type="ChEBI" id="CHEBI:59789"/>
        <dbReference type="ChEBI" id="CHEBI:64428"/>
        <dbReference type="ChEBI" id="CHEBI:74415"/>
        <dbReference type="ChEBI" id="CHEBI:74417"/>
        <dbReference type="EC" id="2.8.4.3"/>
    </reaction>
</comment>
<comment type="cofactor">
    <cofactor evidence="1">
        <name>[4Fe-4S] cluster</name>
        <dbReference type="ChEBI" id="CHEBI:49883"/>
    </cofactor>
    <text evidence="1">Binds 2 [4Fe-4S] clusters. One cluster is coordinated with 3 cysteines and an exchangeable S-adenosyl-L-methionine.</text>
</comment>
<comment type="subunit">
    <text evidence="1">Monomer.</text>
</comment>
<comment type="subcellular location">
    <subcellularLocation>
        <location evidence="1">Cytoplasm</location>
    </subcellularLocation>
</comment>
<comment type="similarity">
    <text evidence="1">Belongs to the methylthiotransferase family. MiaB subfamily.</text>
</comment>
<sequence>MPGTSVSDLPTTATAVDAPALLPLPVGRPQAPALVRGKLYIKTHGCQMNEYDSAKMADVLAASEGLELTDNPEDADVVLVNTCSIREKAQEKVFSQLGRWKALKAGGKPVIIGVGGCVASQEGEAIVKRAPYVDLVFGPQTLHRLPELIRARRESGKSQVDISFPEIEKFDRLPEPRADGPSAFVSIMEGCSKYCSFCVVPYTRGEEVSRPFEDVLVEVAQLAAQGVREINLLGQNVNAYRGAYGADAGEPAQYADLGLLIRTIAQIDGIGRIRFTTSHPLEFSDSLVDAYRDVPQLANYLHLPVQAGSDRILSAMKRGYTALEFKSKIRKLRAVRPDISISSDFIVGFPGETDADFDKTMKLIEDVGFDQSFSFIYSRRPGTPASDLEDDTPDAVKQARLARLQAHINAHAAGISQRMVGSVQRVLVEGPSRRDANELTGKTENMRPVNFPGNPRLVGQFVDVLITEALSNSLRGRIQLDDSAA</sequence>
<feature type="chain" id="PRO_0000374643" description="tRNA-2-methylthio-N(6)-dimethylallyladenosine synthase">
    <location>
        <begin position="1"/>
        <end position="485"/>
    </location>
</feature>
<feature type="domain" description="MTTase N-terminal" evidence="1">
    <location>
        <begin position="37"/>
        <end position="154"/>
    </location>
</feature>
<feature type="domain" description="Radical SAM core" evidence="2">
    <location>
        <begin position="177"/>
        <end position="416"/>
    </location>
</feature>
<feature type="domain" description="TRAM" evidence="1">
    <location>
        <begin position="417"/>
        <end position="480"/>
    </location>
</feature>
<feature type="binding site" evidence="1">
    <location>
        <position position="46"/>
    </location>
    <ligand>
        <name>[4Fe-4S] cluster</name>
        <dbReference type="ChEBI" id="CHEBI:49883"/>
        <label>1</label>
    </ligand>
</feature>
<feature type="binding site" evidence="1">
    <location>
        <position position="83"/>
    </location>
    <ligand>
        <name>[4Fe-4S] cluster</name>
        <dbReference type="ChEBI" id="CHEBI:49883"/>
        <label>1</label>
    </ligand>
</feature>
<feature type="binding site" evidence="1">
    <location>
        <position position="117"/>
    </location>
    <ligand>
        <name>[4Fe-4S] cluster</name>
        <dbReference type="ChEBI" id="CHEBI:49883"/>
        <label>1</label>
    </ligand>
</feature>
<feature type="binding site" evidence="1">
    <location>
        <position position="191"/>
    </location>
    <ligand>
        <name>[4Fe-4S] cluster</name>
        <dbReference type="ChEBI" id="CHEBI:49883"/>
        <label>2</label>
        <note>4Fe-4S-S-AdoMet</note>
    </ligand>
</feature>
<feature type="binding site" evidence="1">
    <location>
        <position position="195"/>
    </location>
    <ligand>
        <name>[4Fe-4S] cluster</name>
        <dbReference type="ChEBI" id="CHEBI:49883"/>
        <label>2</label>
        <note>4Fe-4S-S-AdoMet</note>
    </ligand>
</feature>
<feature type="binding site" evidence="1">
    <location>
        <position position="198"/>
    </location>
    <ligand>
        <name>[4Fe-4S] cluster</name>
        <dbReference type="ChEBI" id="CHEBI:49883"/>
        <label>2</label>
        <note>4Fe-4S-S-AdoMet</note>
    </ligand>
</feature>
<proteinExistence type="inferred from homology"/>
<protein>
    <recommendedName>
        <fullName evidence="1">tRNA-2-methylthio-N(6)-dimethylallyladenosine synthase</fullName>
        <ecNumber evidence="1">2.8.4.3</ecNumber>
    </recommendedName>
    <alternativeName>
        <fullName evidence="1">(Dimethylallyl)adenosine tRNA methylthiotransferase MiaB</fullName>
    </alternativeName>
    <alternativeName>
        <fullName evidence="1">tRNA-i(6)A37 methylthiotransferase</fullName>
    </alternativeName>
</protein>
<evidence type="ECO:0000255" key="1">
    <source>
        <dbReference type="HAMAP-Rule" id="MF_01864"/>
    </source>
</evidence>
<evidence type="ECO:0000255" key="2">
    <source>
        <dbReference type="PROSITE-ProRule" id="PRU01266"/>
    </source>
</evidence>
<name>MIAB_XANCP</name>